<keyword id="KW-0175">Coiled coil</keyword>
<keyword id="KW-0967">Endosome</keyword>
<keyword id="KW-0653">Protein transport</keyword>
<keyword id="KW-1185">Reference proteome</keyword>
<keyword id="KW-0813">Transport</keyword>
<comment type="function">
    <text evidence="1">May be involved in copper-dependent atp7a trafficking between the trans-Golgi network and vesicles in the cell periphery.</text>
</comment>
<comment type="subcellular location">
    <subcellularLocation>
        <location evidence="1">Early endosome</location>
    </subcellularLocation>
</comment>
<comment type="similarity">
    <text evidence="3">Belongs to the CCDC93 family.</text>
</comment>
<sequence>MTARGETPEVETREDEEQSVKLAEILELLVAAGYFRARIKGLSPFDKVVGGMTWCITTCNFDIDVDLLFQENSTIGQKIALTEKIVSVLPKMKCPHRLEPHQIQGLDFIHIFPVIQWLVKRAIETRQEMGDYIRSYSVSQFQKEHSLPEDQEFEHRREKAVRTLSETLDVYRPRRKYKRQGGSAELMDEESRVHSTLLEYGRRYGLSKQMKPEKPEDRKVPVPQGLVGKGEVKEEEELRAEEELRIKALMTEMAAMGMEEGRLTASTVGQIVGLQSDEIKQMVSEYAEKQSELSAEDRPEYLGAAQQHRRKVASLNKQIGQRKKLLDQLQEKASELQSGSCEAKKQLTEVTSHMENLEQELLVLEKVESKADPSVLQKLRDLVAQNESLKLQEQQFRSKCREEMSRLQQNIDSLKAAATEHGEEKEQSQAFEQQYKAEKEKLQKIRLLLARRNREIAILHRKIDEVPSRAELTQYQKRFIELYGQVSATHKETKQFFTLYNTLDDKKVYLEKEVNLLNSVHDNFQQAMASPSVRDQFLRQMEQIVDGIRQSRNKMEKKKQENKMKRDQLNDEYLELLEKQRLYFKTVKEFREECRRNETLLTKMKGQTP</sequence>
<gene>
    <name type="primary">ccdc93</name>
</gene>
<accession>Q6GQI5</accession>
<proteinExistence type="evidence at transcript level"/>
<evidence type="ECO:0000250" key="1">
    <source>
        <dbReference type="UniProtKB" id="Q567U6"/>
    </source>
</evidence>
<evidence type="ECO:0000255" key="2"/>
<evidence type="ECO:0000305" key="3"/>
<name>CCD93_XENLA</name>
<dbReference type="EMBL" id="BC072758">
    <property type="protein sequence ID" value="AAH72758.1"/>
    <property type="molecule type" value="mRNA"/>
</dbReference>
<dbReference type="RefSeq" id="NP_001085446.1">
    <property type="nucleotide sequence ID" value="NM_001091977.1"/>
</dbReference>
<dbReference type="SMR" id="Q6GQI5"/>
<dbReference type="DNASU" id="443872"/>
<dbReference type="GeneID" id="443872"/>
<dbReference type="KEGG" id="xla:443872"/>
<dbReference type="AGR" id="Xenbase:XB-GENE-5914357"/>
<dbReference type="CTD" id="443872"/>
<dbReference type="Xenbase" id="XB-GENE-5914357">
    <property type="gene designation" value="ccdc93.L"/>
</dbReference>
<dbReference type="OMA" id="YERQEAP"/>
<dbReference type="OrthoDB" id="16092at2759"/>
<dbReference type="Proteomes" id="UP000186698">
    <property type="component" value="Chromosome 9_10L"/>
</dbReference>
<dbReference type="Bgee" id="443872">
    <property type="expression patterns" value="Expressed in internal ear and 19 other cell types or tissues"/>
</dbReference>
<dbReference type="GO" id="GO:0005769">
    <property type="term" value="C:early endosome"/>
    <property type="evidence" value="ECO:0007669"/>
    <property type="project" value="UniProtKB-SubCell"/>
</dbReference>
<dbReference type="GO" id="GO:0006893">
    <property type="term" value="P:Golgi to plasma membrane transport"/>
    <property type="evidence" value="ECO:0000318"/>
    <property type="project" value="GO_Central"/>
</dbReference>
<dbReference type="GO" id="GO:0015031">
    <property type="term" value="P:protein transport"/>
    <property type="evidence" value="ECO:0007669"/>
    <property type="project" value="UniProtKB-KW"/>
</dbReference>
<dbReference type="InterPro" id="IPR039116">
    <property type="entry name" value="CCDC93"/>
</dbReference>
<dbReference type="InterPro" id="IPR019159">
    <property type="entry name" value="CCDC93_CC"/>
</dbReference>
<dbReference type="InterPro" id="IPR048747">
    <property type="entry name" value="CCDC93_N"/>
</dbReference>
<dbReference type="PANTHER" id="PTHR16441:SF0">
    <property type="entry name" value="COILED-COIL DOMAIN-CONTAINING PROTEIN 93"/>
    <property type="match status" value="1"/>
</dbReference>
<dbReference type="PANTHER" id="PTHR16441">
    <property type="entry name" value="FIDIPIDINE"/>
    <property type="match status" value="1"/>
</dbReference>
<dbReference type="Pfam" id="PF09762">
    <property type="entry name" value="CCDC93_CC"/>
    <property type="match status" value="1"/>
</dbReference>
<dbReference type="Pfam" id="PF21673">
    <property type="entry name" value="CCDC93_N"/>
    <property type="match status" value="1"/>
</dbReference>
<reference key="1">
    <citation type="submission" date="2004-06" db="EMBL/GenBank/DDBJ databases">
        <authorList>
            <consortium name="NIH - Xenopus Gene Collection (XGC) project"/>
        </authorList>
    </citation>
    <scope>NUCLEOTIDE SEQUENCE [LARGE SCALE MRNA]</scope>
    <source>
        <tissue>Ovary</tissue>
    </source>
</reference>
<organism>
    <name type="scientific">Xenopus laevis</name>
    <name type="common">African clawed frog</name>
    <dbReference type="NCBI Taxonomy" id="8355"/>
    <lineage>
        <taxon>Eukaryota</taxon>
        <taxon>Metazoa</taxon>
        <taxon>Chordata</taxon>
        <taxon>Craniata</taxon>
        <taxon>Vertebrata</taxon>
        <taxon>Euteleostomi</taxon>
        <taxon>Amphibia</taxon>
        <taxon>Batrachia</taxon>
        <taxon>Anura</taxon>
        <taxon>Pipoidea</taxon>
        <taxon>Pipidae</taxon>
        <taxon>Xenopodinae</taxon>
        <taxon>Xenopus</taxon>
        <taxon>Xenopus</taxon>
    </lineage>
</organism>
<feature type="chain" id="PRO_0000234608" description="Coiled-coil domain-containing protein 93">
    <location>
        <begin position="1"/>
        <end position="609"/>
    </location>
</feature>
<feature type="coiled-coil region" evidence="2">
    <location>
        <begin position="229"/>
        <end position="459"/>
    </location>
</feature>
<feature type="coiled-coil region" evidence="2">
    <location>
        <begin position="510"/>
        <end position="579"/>
    </location>
</feature>
<protein>
    <recommendedName>
        <fullName>Coiled-coil domain-containing protein 93</fullName>
    </recommendedName>
</protein>